<name>MNME_STAAR</name>
<gene>
    <name evidence="1" type="primary">mnmE</name>
    <name evidence="1" type="synonym">trmE</name>
    <name type="ordered locus">SAR2798</name>
</gene>
<proteinExistence type="inferred from homology"/>
<sequence length="459" mass="51341">MDLDTITSISTPMGEGAIGIVRLSGPQAVEIADKLYKGKHLLNDVPSHTINYGHIIDPESKEVVEEVMVSVLRAPKTFTREDIIEINCHGGILTINRVLELTMTYGARMAEPGEFTKRAFLNGRIDLSQAEAVMDFIRSKTDRASKVAMNQIEGRLSDLIKKQRQSILEILAQVEVNIDYPEYDDVEDATTEFLLEQSKEIKQEINRLLDTGAQGKIMREGLSTVIVGKPNVGKSSMLNNLIQDNKAIVTEVAGTTRDVLEEYVNVRGVPLRLVDTAGIRETEDIVEKIGVERSRKALSQADLILFVLNNNEALTQEDYTLYEVVKNEDVIVIVNKMDLEQNIDINEVKDMIGDTPLIQTSMLKQEGIDELEIQIRDLFFGGEVQNQDMTYVSNSRHISLLKQARQTIQDAIDAAESGVPMDMVQIDLTRTWEILGEIIGETASDELIDQLFSQFCLGK</sequence>
<keyword id="KW-0963">Cytoplasm</keyword>
<keyword id="KW-0342">GTP-binding</keyword>
<keyword id="KW-0378">Hydrolase</keyword>
<keyword id="KW-0460">Magnesium</keyword>
<keyword id="KW-0479">Metal-binding</keyword>
<keyword id="KW-0547">Nucleotide-binding</keyword>
<keyword id="KW-0630">Potassium</keyword>
<keyword id="KW-0819">tRNA processing</keyword>
<evidence type="ECO:0000255" key="1">
    <source>
        <dbReference type="HAMAP-Rule" id="MF_00379"/>
    </source>
</evidence>
<reference key="1">
    <citation type="journal article" date="2004" name="Proc. Natl. Acad. Sci. U.S.A.">
        <title>Complete genomes of two clinical Staphylococcus aureus strains: evidence for the rapid evolution of virulence and drug resistance.</title>
        <authorList>
            <person name="Holden M.T.G."/>
            <person name="Feil E.J."/>
            <person name="Lindsay J.A."/>
            <person name="Peacock S.J."/>
            <person name="Day N.P.J."/>
            <person name="Enright M.C."/>
            <person name="Foster T.J."/>
            <person name="Moore C.E."/>
            <person name="Hurst L."/>
            <person name="Atkin R."/>
            <person name="Barron A."/>
            <person name="Bason N."/>
            <person name="Bentley S.D."/>
            <person name="Chillingworth C."/>
            <person name="Chillingworth T."/>
            <person name="Churcher C."/>
            <person name="Clark L."/>
            <person name="Corton C."/>
            <person name="Cronin A."/>
            <person name="Doggett J."/>
            <person name="Dowd L."/>
            <person name="Feltwell T."/>
            <person name="Hance Z."/>
            <person name="Harris B."/>
            <person name="Hauser H."/>
            <person name="Holroyd S."/>
            <person name="Jagels K."/>
            <person name="James K.D."/>
            <person name="Lennard N."/>
            <person name="Line A."/>
            <person name="Mayes R."/>
            <person name="Moule S."/>
            <person name="Mungall K."/>
            <person name="Ormond D."/>
            <person name="Quail M.A."/>
            <person name="Rabbinowitsch E."/>
            <person name="Rutherford K.M."/>
            <person name="Sanders M."/>
            <person name="Sharp S."/>
            <person name="Simmonds M."/>
            <person name="Stevens K."/>
            <person name="Whitehead S."/>
            <person name="Barrell B.G."/>
            <person name="Spratt B.G."/>
            <person name="Parkhill J."/>
        </authorList>
    </citation>
    <scope>NUCLEOTIDE SEQUENCE [LARGE SCALE GENOMIC DNA]</scope>
    <source>
        <strain>MRSA252</strain>
    </source>
</reference>
<accession>Q6GD92</accession>
<comment type="function">
    <text evidence="1">Exhibits a very high intrinsic GTPase hydrolysis rate. Involved in the addition of a carboxymethylaminomethyl (cmnm) group at the wobble position (U34) of certain tRNAs, forming tRNA-cmnm(5)s(2)U34.</text>
</comment>
<comment type="cofactor">
    <cofactor evidence="1">
        <name>K(+)</name>
        <dbReference type="ChEBI" id="CHEBI:29103"/>
    </cofactor>
    <text evidence="1">Binds 1 potassium ion per subunit.</text>
</comment>
<comment type="subunit">
    <text evidence="1">Homodimer. Heterotetramer of two MnmE and two MnmG subunits.</text>
</comment>
<comment type="subcellular location">
    <subcellularLocation>
        <location evidence="1">Cytoplasm</location>
    </subcellularLocation>
</comment>
<comment type="similarity">
    <text evidence="1">Belongs to the TRAFAC class TrmE-Era-EngA-EngB-Septin-like GTPase superfamily. TrmE GTPase family.</text>
</comment>
<dbReference type="EC" id="3.6.-.-" evidence="1"/>
<dbReference type="EMBL" id="BX571856">
    <property type="protein sequence ID" value="CAG41770.1"/>
    <property type="molecule type" value="Genomic_DNA"/>
</dbReference>
<dbReference type="RefSeq" id="WP_000362509.1">
    <property type="nucleotide sequence ID" value="NC_002952.2"/>
</dbReference>
<dbReference type="SMR" id="Q6GD92"/>
<dbReference type="KEGG" id="sar:SAR2798"/>
<dbReference type="HOGENOM" id="CLU_019624_4_1_9"/>
<dbReference type="Proteomes" id="UP000000596">
    <property type="component" value="Chromosome"/>
</dbReference>
<dbReference type="GO" id="GO:0005829">
    <property type="term" value="C:cytosol"/>
    <property type="evidence" value="ECO:0007669"/>
    <property type="project" value="TreeGrafter"/>
</dbReference>
<dbReference type="GO" id="GO:0005525">
    <property type="term" value="F:GTP binding"/>
    <property type="evidence" value="ECO:0007669"/>
    <property type="project" value="UniProtKB-UniRule"/>
</dbReference>
<dbReference type="GO" id="GO:0003924">
    <property type="term" value="F:GTPase activity"/>
    <property type="evidence" value="ECO:0007669"/>
    <property type="project" value="UniProtKB-UniRule"/>
</dbReference>
<dbReference type="GO" id="GO:0046872">
    <property type="term" value="F:metal ion binding"/>
    <property type="evidence" value="ECO:0007669"/>
    <property type="project" value="UniProtKB-KW"/>
</dbReference>
<dbReference type="GO" id="GO:0030488">
    <property type="term" value="P:tRNA methylation"/>
    <property type="evidence" value="ECO:0007669"/>
    <property type="project" value="TreeGrafter"/>
</dbReference>
<dbReference type="GO" id="GO:0002098">
    <property type="term" value="P:tRNA wobble uridine modification"/>
    <property type="evidence" value="ECO:0007669"/>
    <property type="project" value="TreeGrafter"/>
</dbReference>
<dbReference type="CDD" id="cd04164">
    <property type="entry name" value="trmE"/>
    <property type="match status" value="1"/>
</dbReference>
<dbReference type="CDD" id="cd14858">
    <property type="entry name" value="TrmE_N"/>
    <property type="match status" value="1"/>
</dbReference>
<dbReference type="FunFam" id="3.30.1360.120:FF:000003">
    <property type="entry name" value="tRNA modification GTPase MnmE"/>
    <property type="match status" value="1"/>
</dbReference>
<dbReference type="FunFam" id="3.40.50.300:FF:000494">
    <property type="entry name" value="tRNA modification GTPase MnmE"/>
    <property type="match status" value="1"/>
</dbReference>
<dbReference type="Gene3D" id="3.40.50.300">
    <property type="entry name" value="P-loop containing nucleotide triphosphate hydrolases"/>
    <property type="match status" value="1"/>
</dbReference>
<dbReference type="Gene3D" id="3.30.1360.120">
    <property type="entry name" value="Probable tRNA modification gtpase trme, domain 1"/>
    <property type="match status" value="1"/>
</dbReference>
<dbReference type="Gene3D" id="1.20.120.430">
    <property type="entry name" value="tRNA modification GTPase MnmE domain 2"/>
    <property type="match status" value="1"/>
</dbReference>
<dbReference type="HAMAP" id="MF_00379">
    <property type="entry name" value="GTPase_MnmE"/>
    <property type="match status" value="1"/>
</dbReference>
<dbReference type="InterPro" id="IPR031168">
    <property type="entry name" value="G_TrmE"/>
</dbReference>
<dbReference type="InterPro" id="IPR006073">
    <property type="entry name" value="GTP-bd"/>
</dbReference>
<dbReference type="InterPro" id="IPR018948">
    <property type="entry name" value="GTP-bd_TrmE_N"/>
</dbReference>
<dbReference type="InterPro" id="IPR004520">
    <property type="entry name" value="GTPase_MnmE"/>
</dbReference>
<dbReference type="InterPro" id="IPR027368">
    <property type="entry name" value="MnmE_dom2"/>
</dbReference>
<dbReference type="InterPro" id="IPR025867">
    <property type="entry name" value="MnmE_helical"/>
</dbReference>
<dbReference type="InterPro" id="IPR027417">
    <property type="entry name" value="P-loop_NTPase"/>
</dbReference>
<dbReference type="InterPro" id="IPR005225">
    <property type="entry name" value="Small_GTP-bd"/>
</dbReference>
<dbReference type="InterPro" id="IPR027266">
    <property type="entry name" value="TrmE/GcvT_dom1"/>
</dbReference>
<dbReference type="NCBIfam" id="TIGR00450">
    <property type="entry name" value="mnmE_trmE_thdF"/>
    <property type="match status" value="1"/>
</dbReference>
<dbReference type="NCBIfam" id="NF003661">
    <property type="entry name" value="PRK05291.1-3"/>
    <property type="match status" value="1"/>
</dbReference>
<dbReference type="NCBIfam" id="TIGR00231">
    <property type="entry name" value="small_GTP"/>
    <property type="match status" value="1"/>
</dbReference>
<dbReference type="PANTHER" id="PTHR42714">
    <property type="entry name" value="TRNA MODIFICATION GTPASE GTPBP3"/>
    <property type="match status" value="1"/>
</dbReference>
<dbReference type="PANTHER" id="PTHR42714:SF2">
    <property type="entry name" value="TRNA MODIFICATION GTPASE GTPBP3, MITOCHONDRIAL"/>
    <property type="match status" value="1"/>
</dbReference>
<dbReference type="Pfam" id="PF01926">
    <property type="entry name" value="MMR_HSR1"/>
    <property type="match status" value="1"/>
</dbReference>
<dbReference type="Pfam" id="PF12631">
    <property type="entry name" value="MnmE_helical"/>
    <property type="match status" value="1"/>
</dbReference>
<dbReference type="Pfam" id="PF10396">
    <property type="entry name" value="TrmE_N"/>
    <property type="match status" value="1"/>
</dbReference>
<dbReference type="PRINTS" id="PR00449">
    <property type="entry name" value="RASTRNSFRMNG"/>
</dbReference>
<dbReference type="SUPFAM" id="SSF52540">
    <property type="entry name" value="P-loop containing nucleoside triphosphate hydrolases"/>
    <property type="match status" value="1"/>
</dbReference>
<dbReference type="SUPFAM" id="SSF116878">
    <property type="entry name" value="TrmE connector domain"/>
    <property type="match status" value="1"/>
</dbReference>
<dbReference type="PROSITE" id="PS51709">
    <property type="entry name" value="G_TRME"/>
    <property type="match status" value="1"/>
</dbReference>
<organism>
    <name type="scientific">Staphylococcus aureus (strain MRSA252)</name>
    <dbReference type="NCBI Taxonomy" id="282458"/>
    <lineage>
        <taxon>Bacteria</taxon>
        <taxon>Bacillati</taxon>
        <taxon>Bacillota</taxon>
        <taxon>Bacilli</taxon>
        <taxon>Bacillales</taxon>
        <taxon>Staphylococcaceae</taxon>
        <taxon>Staphylococcus</taxon>
    </lineage>
</organism>
<protein>
    <recommendedName>
        <fullName evidence="1">tRNA modification GTPase MnmE</fullName>
        <ecNumber evidence="1">3.6.-.-</ecNumber>
    </recommendedName>
</protein>
<feature type="chain" id="PRO_0000188918" description="tRNA modification GTPase MnmE">
    <location>
        <begin position="1"/>
        <end position="459"/>
    </location>
</feature>
<feature type="domain" description="TrmE-type G">
    <location>
        <begin position="221"/>
        <end position="380"/>
    </location>
</feature>
<feature type="binding site" evidence="1">
    <location>
        <position position="22"/>
    </location>
    <ligand>
        <name>(6S)-5-formyl-5,6,7,8-tetrahydrofolate</name>
        <dbReference type="ChEBI" id="CHEBI:57457"/>
    </ligand>
</feature>
<feature type="binding site" evidence="1">
    <location>
        <position position="85"/>
    </location>
    <ligand>
        <name>(6S)-5-formyl-5,6,7,8-tetrahydrofolate</name>
        <dbReference type="ChEBI" id="CHEBI:57457"/>
    </ligand>
</feature>
<feature type="binding site" evidence="1">
    <location>
        <position position="124"/>
    </location>
    <ligand>
        <name>(6S)-5-formyl-5,6,7,8-tetrahydrofolate</name>
        <dbReference type="ChEBI" id="CHEBI:57457"/>
    </ligand>
</feature>
<feature type="binding site" evidence="1">
    <location>
        <begin position="231"/>
        <end position="236"/>
    </location>
    <ligand>
        <name>GTP</name>
        <dbReference type="ChEBI" id="CHEBI:37565"/>
    </ligand>
</feature>
<feature type="binding site" evidence="1">
    <location>
        <position position="231"/>
    </location>
    <ligand>
        <name>K(+)</name>
        <dbReference type="ChEBI" id="CHEBI:29103"/>
    </ligand>
</feature>
<feature type="binding site" evidence="1">
    <location>
        <position position="235"/>
    </location>
    <ligand>
        <name>Mg(2+)</name>
        <dbReference type="ChEBI" id="CHEBI:18420"/>
    </ligand>
</feature>
<feature type="binding site" evidence="1">
    <location>
        <begin position="250"/>
        <end position="256"/>
    </location>
    <ligand>
        <name>GTP</name>
        <dbReference type="ChEBI" id="CHEBI:37565"/>
    </ligand>
</feature>
<feature type="binding site" evidence="1">
    <location>
        <position position="250"/>
    </location>
    <ligand>
        <name>K(+)</name>
        <dbReference type="ChEBI" id="CHEBI:29103"/>
    </ligand>
</feature>
<feature type="binding site" evidence="1">
    <location>
        <position position="252"/>
    </location>
    <ligand>
        <name>K(+)</name>
        <dbReference type="ChEBI" id="CHEBI:29103"/>
    </ligand>
</feature>
<feature type="binding site" evidence="1">
    <location>
        <position position="255"/>
    </location>
    <ligand>
        <name>K(+)</name>
        <dbReference type="ChEBI" id="CHEBI:29103"/>
    </ligand>
</feature>
<feature type="binding site" evidence="1">
    <location>
        <position position="256"/>
    </location>
    <ligand>
        <name>Mg(2+)</name>
        <dbReference type="ChEBI" id="CHEBI:18420"/>
    </ligand>
</feature>
<feature type="binding site" evidence="1">
    <location>
        <begin position="275"/>
        <end position="278"/>
    </location>
    <ligand>
        <name>GTP</name>
        <dbReference type="ChEBI" id="CHEBI:37565"/>
    </ligand>
</feature>
<feature type="binding site" evidence="1">
    <location>
        <position position="459"/>
    </location>
    <ligand>
        <name>(6S)-5-formyl-5,6,7,8-tetrahydrofolate</name>
        <dbReference type="ChEBI" id="CHEBI:57457"/>
    </ligand>
</feature>